<gene>
    <name evidence="1" type="primary">fabA</name>
    <name type="ordered locus">BPEN_432</name>
</gene>
<keyword id="KW-0963">Cytoplasm</keyword>
<keyword id="KW-0275">Fatty acid biosynthesis</keyword>
<keyword id="KW-0276">Fatty acid metabolism</keyword>
<keyword id="KW-0413">Isomerase</keyword>
<keyword id="KW-0444">Lipid biosynthesis</keyword>
<keyword id="KW-0443">Lipid metabolism</keyword>
<keyword id="KW-0456">Lyase</keyword>
<keyword id="KW-1185">Reference proteome</keyword>
<sequence length="172" mass="19409">MLNKREYYTKEDLLASSRGELFGKNGPTLPAPNMLMMDRVIKMTKNGGNYNKGFIEAELDIQSDMWFFNCHFIKDPVMPGCLGLDAMWQLVGFYLGWLGGEGKGRALGVKEVKFTGQILPTSKKVTYFIHFRRIINRKLIMGMADGEVSCDGKIIYTATDLKVGLFKNSTVF</sequence>
<dbReference type="EC" id="4.2.1.59" evidence="1"/>
<dbReference type="EC" id="5.3.3.14" evidence="1"/>
<dbReference type="EMBL" id="CP000016">
    <property type="protein sequence ID" value="AAZ41051.1"/>
    <property type="molecule type" value="Genomic_DNA"/>
</dbReference>
<dbReference type="RefSeq" id="WP_011282961.1">
    <property type="nucleotide sequence ID" value="NC_007292.1"/>
</dbReference>
<dbReference type="SMR" id="Q492P4"/>
<dbReference type="STRING" id="291272.BPEN_432"/>
<dbReference type="KEGG" id="bpn:BPEN_432"/>
<dbReference type="eggNOG" id="COG0764">
    <property type="taxonomic scope" value="Bacteria"/>
</dbReference>
<dbReference type="HOGENOM" id="CLU_097925_0_0_6"/>
<dbReference type="OrthoDB" id="9786735at2"/>
<dbReference type="UniPathway" id="UPA00094"/>
<dbReference type="Proteomes" id="UP000007794">
    <property type="component" value="Chromosome"/>
</dbReference>
<dbReference type="GO" id="GO:0005737">
    <property type="term" value="C:cytoplasm"/>
    <property type="evidence" value="ECO:0007669"/>
    <property type="project" value="UniProtKB-SubCell"/>
</dbReference>
<dbReference type="GO" id="GO:0019171">
    <property type="term" value="F:(3R)-hydroxyacyl-[acyl-carrier-protein] dehydratase activity"/>
    <property type="evidence" value="ECO:0007669"/>
    <property type="project" value="UniProtKB-UniRule"/>
</dbReference>
<dbReference type="GO" id="GO:0034017">
    <property type="term" value="F:trans-2-decenoyl-acyl-carrier-protein isomerase activity"/>
    <property type="evidence" value="ECO:0007669"/>
    <property type="project" value="UniProtKB-UniRule"/>
</dbReference>
<dbReference type="GO" id="GO:0006636">
    <property type="term" value="P:unsaturated fatty acid biosynthetic process"/>
    <property type="evidence" value="ECO:0007669"/>
    <property type="project" value="UniProtKB-UniRule"/>
</dbReference>
<dbReference type="CDD" id="cd01287">
    <property type="entry name" value="FabA"/>
    <property type="match status" value="1"/>
</dbReference>
<dbReference type="Gene3D" id="3.10.129.10">
    <property type="entry name" value="Hotdog Thioesterase"/>
    <property type="match status" value="1"/>
</dbReference>
<dbReference type="HAMAP" id="MF_00405">
    <property type="entry name" value="FabA"/>
    <property type="match status" value="1"/>
</dbReference>
<dbReference type="InterPro" id="IPR010083">
    <property type="entry name" value="FabA"/>
</dbReference>
<dbReference type="InterPro" id="IPR013114">
    <property type="entry name" value="FabA_FabZ"/>
</dbReference>
<dbReference type="InterPro" id="IPR029069">
    <property type="entry name" value="HotDog_dom_sf"/>
</dbReference>
<dbReference type="NCBIfam" id="TIGR01749">
    <property type="entry name" value="fabA"/>
    <property type="match status" value="1"/>
</dbReference>
<dbReference type="NCBIfam" id="NF003509">
    <property type="entry name" value="PRK05174.1"/>
    <property type="match status" value="1"/>
</dbReference>
<dbReference type="PANTHER" id="PTHR30272">
    <property type="entry name" value="3-HYDROXYACYL-[ACYL-CARRIER-PROTEIN] DEHYDRATASE"/>
    <property type="match status" value="1"/>
</dbReference>
<dbReference type="PANTHER" id="PTHR30272:SF8">
    <property type="entry name" value="3-HYDROXYDECANOYL-[ACYL-CARRIER-PROTEIN] DEHYDRATASE"/>
    <property type="match status" value="1"/>
</dbReference>
<dbReference type="Pfam" id="PF07977">
    <property type="entry name" value="FabA"/>
    <property type="match status" value="1"/>
</dbReference>
<dbReference type="SUPFAM" id="SSF54637">
    <property type="entry name" value="Thioesterase/thiol ester dehydrase-isomerase"/>
    <property type="match status" value="1"/>
</dbReference>
<organism>
    <name type="scientific">Blochmanniella pennsylvanica (strain BPEN)</name>
    <dbReference type="NCBI Taxonomy" id="291272"/>
    <lineage>
        <taxon>Bacteria</taxon>
        <taxon>Pseudomonadati</taxon>
        <taxon>Pseudomonadota</taxon>
        <taxon>Gammaproteobacteria</taxon>
        <taxon>Enterobacterales</taxon>
        <taxon>Enterobacteriaceae</taxon>
        <taxon>ant endosymbionts</taxon>
        <taxon>Candidatus Blochmanniella</taxon>
    </lineage>
</organism>
<protein>
    <recommendedName>
        <fullName evidence="1">3-hydroxydecanoyl-[acyl-carrier-protein] dehydratase</fullName>
        <ecNumber evidence="1">4.2.1.59</ecNumber>
    </recommendedName>
    <alternativeName>
        <fullName evidence="1">3-hydroxyacyl-[acyl-carrier-protein] dehydratase FabA</fullName>
    </alternativeName>
    <alternativeName>
        <fullName evidence="1">Beta-hydroxydecanoyl thioester dehydrase</fullName>
    </alternativeName>
    <alternativeName>
        <fullName evidence="1">Trans-2-decenoyl-[acyl-carrier-protein] isomerase</fullName>
        <ecNumber evidence="1">5.3.3.14</ecNumber>
    </alternativeName>
</protein>
<name>FABA_BLOPB</name>
<reference key="1">
    <citation type="journal article" date="2005" name="Genome Res.">
        <title>Genome sequence of Blochmannia pennsylvanicus indicates parallel evolutionary trends among bacterial mutualists of insects.</title>
        <authorList>
            <person name="Degnan P.H."/>
            <person name="Lazarus A.B."/>
            <person name="Wernegreen J.J."/>
        </authorList>
    </citation>
    <scope>NUCLEOTIDE SEQUENCE [LARGE SCALE GENOMIC DNA]</scope>
    <source>
        <strain>BPEN</strain>
    </source>
</reference>
<comment type="function">
    <text evidence="1">Necessary for the introduction of cis unsaturation into fatty acids. Catalyzes the dehydration of (3R)-3-hydroxydecanoyl-ACP to E-(2)-decenoyl-ACP and then its isomerization to Z-(3)-decenoyl-ACP. Can catalyze the dehydratase reaction for beta-hydroxyacyl-ACPs with saturated chain lengths up to 16:0, being most active on intermediate chain length.</text>
</comment>
<comment type="catalytic activity">
    <reaction evidence="1">
        <text>a (3R)-hydroxyacyl-[ACP] = a (2E)-enoyl-[ACP] + H2O</text>
        <dbReference type="Rhea" id="RHEA:13097"/>
        <dbReference type="Rhea" id="RHEA-COMP:9925"/>
        <dbReference type="Rhea" id="RHEA-COMP:9945"/>
        <dbReference type="ChEBI" id="CHEBI:15377"/>
        <dbReference type="ChEBI" id="CHEBI:78784"/>
        <dbReference type="ChEBI" id="CHEBI:78827"/>
        <dbReference type="EC" id="4.2.1.59"/>
    </reaction>
</comment>
<comment type="catalytic activity">
    <reaction evidence="1">
        <text>(3R)-hydroxydecanoyl-[ACP] = (2E)-decenoyl-[ACP] + H2O</text>
        <dbReference type="Rhea" id="RHEA:41860"/>
        <dbReference type="Rhea" id="RHEA-COMP:9638"/>
        <dbReference type="Rhea" id="RHEA-COMP:9639"/>
        <dbReference type="ChEBI" id="CHEBI:15377"/>
        <dbReference type="ChEBI" id="CHEBI:78466"/>
        <dbReference type="ChEBI" id="CHEBI:78467"/>
    </reaction>
</comment>
<comment type="catalytic activity">
    <reaction evidence="1">
        <text>(2E)-decenoyl-[ACP] = (3Z)-decenoyl-[ACP]</text>
        <dbReference type="Rhea" id="RHEA:23568"/>
        <dbReference type="Rhea" id="RHEA-COMP:9639"/>
        <dbReference type="Rhea" id="RHEA-COMP:9927"/>
        <dbReference type="ChEBI" id="CHEBI:78467"/>
        <dbReference type="ChEBI" id="CHEBI:78798"/>
        <dbReference type="EC" id="5.3.3.14"/>
    </reaction>
</comment>
<comment type="pathway">
    <text evidence="1">Lipid metabolism; fatty acid biosynthesis.</text>
</comment>
<comment type="subunit">
    <text evidence="1">Homodimer.</text>
</comment>
<comment type="subcellular location">
    <subcellularLocation>
        <location evidence="1">Cytoplasm</location>
    </subcellularLocation>
</comment>
<comment type="similarity">
    <text evidence="1">Belongs to the thioester dehydratase family. FabA subfamily.</text>
</comment>
<evidence type="ECO:0000255" key="1">
    <source>
        <dbReference type="HAMAP-Rule" id="MF_00405"/>
    </source>
</evidence>
<feature type="chain" id="PRO_0000267722" description="3-hydroxydecanoyl-[acyl-carrier-protein] dehydratase">
    <location>
        <begin position="1"/>
        <end position="172"/>
    </location>
</feature>
<feature type="active site" evidence="1">
    <location>
        <position position="71"/>
    </location>
</feature>
<proteinExistence type="inferred from homology"/>
<accession>Q492P4</accession>